<feature type="chain" id="PRO_0000240781" description="Argininosuccinate lyase">
    <location>
        <begin position="1"/>
        <end position="472"/>
    </location>
</feature>
<gene>
    <name evidence="1" type="primary">argH</name>
    <name type="ordered locus">Syncc9902_0013</name>
</gene>
<comment type="catalytic activity">
    <reaction evidence="1">
        <text>2-(N(omega)-L-arginino)succinate = fumarate + L-arginine</text>
        <dbReference type="Rhea" id="RHEA:24020"/>
        <dbReference type="ChEBI" id="CHEBI:29806"/>
        <dbReference type="ChEBI" id="CHEBI:32682"/>
        <dbReference type="ChEBI" id="CHEBI:57472"/>
        <dbReference type="EC" id="4.3.2.1"/>
    </reaction>
</comment>
<comment type="pathway">
    <text evidence="1">Amino-acid biosynthesis; L-arginine biosynthesis; L-arginine from L-ornithine and carbamoyl phosphate: step 3/3.</text>
</comment>
<comment type="subcellular location">
    <subcellularLocation>
        <location evidence="1">Cytoplasm</location>
    </subcellularLocation>
</comment>
<comment type="similarity">
    <text evidence="1">Belongs to the lyase 1 family. Argininosuccinate lyase subfamily.</text>
</comment>
<comment type="sequence caution" evidence="2">
    <conflict type="erroneous initiation">
        <sequence resource="EMBL-CDS" id="ABB24988"/>
    </conflict>
</comment>
<protein>
    <recommendedName>
        <fullName evidence="1">Argininosuccinate lyase</fullName>
        <shortName evidence="1">ASAL</shortName>
        <ecNumber evidence="1">4.3.2.1</ecNumber>
    </recommendedName>
    <alternativeName>
        <fullName evidence="1">Arginosuccinase</fullName>
    </alternativeName>
</protein>
<dbReference type="EC" id="4.3.2.1" evidence="1"/>
<dbReference type="EMBL" id="CP000097">
    <property type="protein sequence ID" value="ABB24988.1"/>
    <property type="status" value="ALT_INIT"/>
    <property type="molecule type" value="Genomic_DNA"/>
</dbReference>
<dbReference type="RefSeq" id="WP_198001758.1">
    <property type="nucleotide sequence ID" value="NC_007513.1"/>
</dbReference>
<dbReference type="SMR" id="Q3B0Z0"/>
<dbReference type="STRING" id="316279.Syncc9902_0013"/>
<dbReference type="KEGG" id="sye:Syncc9902_0013"/>
<dbReference type="eggNOG" id="COG0165">
    <property type="taxonomic scope" value="Bacteria"/>
</dbReference>
<dbReference type="HOGENOM" id="CLU_027272_2_3_3"/>
<dbReference type="UniPathway" id="UPA00068">
    <property type="reaction ID" value="UER00114"/>
</dbReference>
<dbReference type="Proteomes" id="UP000002712">
    <property type="component" value="Chromosome"/>
</dbReference>
<dbReference type="GO" id="GO:0005829">
    <property type="term" value="C:cytosol"/>
    <property type="evidence" value="ECO:0007669"/>
    <property type="project" value="TreeGrafter"/>
</dbReference>
<dbReference type="GO" id="GO:0004056">
    <property type="term" value="F:argininosuccinate lyase activity"/>
    <property type="evidence" value="ECO:0007669"/>
    <property type="project" value="UniProtKB-UniRule"/>
</dbReference>
<dbReference type="GO" id="GO:0042450">
    <property type="term" value="P:arginine biosynthetic process via ornithine"/>
    <property type="evidence" value="ECO:0007669"/>
    <property type="project" value="InterPro"/>
</dbReference>
<dbReference type="GO" id="GO:0006526">
    <property type="term" value="P:L-arginine biosynthetic process"/>
    <property type="evidence" value="ECO:0007669"/>
    <property type="project" value="UniProtKB-UniRule"/>
</dbReference>
<dbReference type="CDD" id="cd01359">
    <property type="entry name" value="Argininosuccinate_lyase"/>
    <property type="match status" value="1"/>
</dbReference>
<dbReference type="FunFam" id="1.10.275.10:FF:000002">
    <property type="entry name" value="Argininosuccinate lyase"/>
    <property type="match status" value="1"/>
</dbReference>
<dbReference type="FunFam" id="1.10.40.30:FF:000001">
    <property type="entry name" value="Argininosuccinate lyase"/>
    <property type="match status" value="1"/>
</dbReference>
<dbReference type="FunFam" id="1.20.200.10:FF:000015">
    <property type="entry name" value="argininosuccinate lyase isoform X2"/>
    <property type="match status" value="1"/>
</dbReference>
<dbReference type="Gene3D" id="1.10.40.30">
    <property type="entry name" value="Fumarase/aspartase (C-terminal domain)"/>
    <property type="match status" value="1"/>
</dbReference>
<dbReference type="Gene3D" id="1.20.200.10">
    <property type="entry name" value="Fumarase/aspartase (Central domain)"/>
    <property type="match status" value="1"/>
</dbReference>
<dbReference type="Gene3D" id="1.10.275.10">
    <property type="entry name" value="Fumarase/aspartase (N-terminal domain)"/>
    <property type="match status" value="1"/>
</dbReference>
<dbReference type="HAMAP" id="MF_00006">
    <property type="entry name" value="Arg_succ_lyase"/>
    <property type="match status" value="1"/>
</dbReference>
<dbReference type="InterPro" id="IPR029419">
    <property type="entry name" value="Arg_succ_lyase_C"/>
</dbReference>
<dbReference type="InterPro" id="IPR009049">
    <property type="entry name" value="Argininosuccinate_lyase"/>
</dbReference>
<dbReference type="InterPro" id="IPR024083">
    <property type="entry name" value="Fumarase/histidase_N"/>
</dbReference>
<dbReference type="InterPro" id="IPR020557">
    <property type="entry name" value="Fumarate_lyase_CS"/>
</dbReference>
<dbReference type="InterPro" id="IPR000362">
    <property type="entry name" value="Fumarate_lyase_fam"/>
</dbReference>
<dbReference type="InterPro" id="IPR022761">
    <property type="entry name" value="Fumarate_lyase_N"/>
</dbReference>
<dbReference type="InterPro" id="IPR008948">
    <property type="entry name" value="L-Aspartase-like"/>
</dbReference>
<dbReference type="NCBIfam" id="TIGR00838">
    <property type="entry name" value="argH"/>
    <property type="match status" value="1"/>
</dbReference>
<dbReference type="PANTHER" id="PTHR43814">
    <property type="entry name" value="ARGININOSUCCINATE LYASE"/>
    <property type="match status" value="1"/>
</dbReference>
<dbReference type="PANTHER" id="PTHR43814:SF1">
    <property type="entry name" value="ARGININOSUCCINATE LYASE"/>
    <property type="match status" value="1"/>
</dbReference>
<dbReference type="Pfam" id="PF14698">
    <property type="entry name" value="ASL_C2"/>
    <property type="match status" value="1"/>
</dbReference>
<dbReference type="Pfam" id="PF00206">
    <property type="entry name" value="Lyase_1"/>
    <property type="match status" value="1"/>
</dbReference>
<dbReference type="PRINTS" id="PR00145">
    <property type="entry name" value="ARGSUCLYASE"/>
</dbReference>
<dbReference type="PRINTS" id="PR00149">
    <property type="entry name" value="FUMRATELYASE"/>
</dbReference>
<dbReference type="SUPFAM" id="SSF48557">
    <property type="entry name" value="L-aspartase-like"/>
    <property type="match status" value="1"/>
</dbReference>
<dbReference type="PROSITE" id="PS00163">
    <property type="entry name" value="FUMARATE_LYASES"/>
    <property type="match status" value="1"/>
</dbReference>
<reference key="1">
    <citation type="submission" date="2005-08" db="EMBL/GenBank/DDBJ databases">
        <title>Complete sequence of Synechococcus sp. CC9902.</title>
        <authorList>
            <person name="Copeland A."/>
            <person name="Lucas S."/>
            <person name="Lapidus A."/>
            <person name="Barry K."/>
            <person name="Detter J.C."/>
            <person name="Glavina T."/>
            <person name="Hammon N."/>
            <person name="Israni S."/>
            <person name="Pitluck S."/>
            <person name="Martinez M."/>
            <person name="Schmutz J."/>
            <person name="Larimer F."/>
            <person name="Land M."/>
            <person name="Kyrpides N."/>
            <person name="Ivanova N."/>
            <person name="Richardson P."/>
        </authorList>
    </citation>
    <scope>NUCLEOTIDE SEQUENCE [LARGE SCALE GENOMIC DNA]</scope>
    <source>
        <strain>CC9902</strain>
    </source>
</reference>
<keyword id="KW-0028">Amino-acid biosynthesis</keyword>
<keyword id="KW-0055">Arginine biosynthesis</keyword>
<keyword id="KW-0963">Cytoplasm</keyword>
<keyword id="KW-0456">Lyase</keyword>
<keyword id="KW-1185">Reference proteome</keyword>
<evidence type="ECO:0000255" key="1">
    <source>
        <dbReference type="HAMAP-Rule" id="MF_00006"/>
    </source>
</evidence>
<evidence type="ECO:0000305" key="2"/>
<organism>
    <name type="scientific">Synechococcus sp. (strain CC9902)</name>
    <dbReference type="NCBI Taxonomy" id="316279"/>
    <lineage>
        <taxon>Bacteria</taxon>
        <taxon>Bacillati</taxon>
        <taxon>Cyanobacteriota</taxon>
        <taxon>Cyanophyceae</taxon>
        <taxon>Synechococcales</taxon>
        <taxon>Synechococcaceae</taxon>
        <taxon>Synechococcus</taxon>
    </lineage>
</organism>
<accession>Q3B0Z0</accession>
<proteinExistence type="inferred from homology"/>
<name>ARLY_SYNS9</name>
<sequence>MAGGVTGGADGTWSDRFEQGLHPFIEVFNASIGFDLTLLQEDLDGSIAHARMLGSCGVISVEEAEQLVQGLETIRSEAHAGTFQPGLADEDVHFAVERRLIALLGPVGKKLHTGRSRNDQVGTDLRLWLRRRLDELEGDLQRLQRALVAQADLHRRTMIPGYTHLQRAQPLCLAHHLLAYVEMLERDRLRLHDVRSRVNICPLGAAALAGTPVPIDRQQTAKALGFDAIYANSLDAVSDRDFCVEFSAAASLVMAHLSRLAEEVIAWASEEFRFVRLSDRCATGSSLMPQKKNPDVPELVRGKCGRVFGHLQGLLTMIKGLPLAYNKDFQEDKEALFDAFRTTRDCIEAMAILFEEGLEFRTERLNTAVEQDFSNATDVADYLVAKGVPFREAYQLVGAVVRRCLDEGCLLRDLSLAAWQELHPAFEADLHDALAPQAVVAARRSEGGTGFDRVDEQLGRWLQHLNGTQPVG</sequence>